<feature type="chain" id="PRO_1000072330" description="RNA-binding protein Hfq">
    <location>
        <begin position="1"/>
        <end position="80"/>
    </location>
</feature>
<feature type="domain" description="Sm" evidence="2">
    <location>
        <begin position="10"/>
        <end position="70"/>
    </location>
</feature>
<evidence type="ECO:0000255" key="1">
    <source>
        <dbReference type="HAMAP-Rule" id="MF_00436"/>
    </source>
</evidence>
<evidence type="ECO:0000255" key="2">
    <source>
        <dbReference type="PROSITE-ProRule" id="PRU01346"/>
    </source>
</evidence>
<organism>
    <name type="scientific">Desulforamulus reducens (strain ATCC BAA-1160 / DSM 100696 / MI-1)</name>
    <name type="common">Desulfotomaculum reducens</name>
    <dbReference type="NCBI Taxonomy" id="349161"/>
    <lineage>
        <taxon>Bacteria</taxon>
        <taxon>Bacillati</taxon>
        <taxon>Bacillota</taxon>
        <taxon>Clostridia</taxon>
        <taxon>Eubacteriales</taxon>
        <taxon>Peptococcaceae</taxon>
        <taxon>Desulforamulus</taxon>
    </lineage>
</organism>
<proteinExistence type="inferred from homology"/>
<name>HFQ_DESRM</name>
<reference key="1">
    <citation type="submission" date="2007-03" db="EMBL/GenBank/DDBJ databases">
        <title>Complete sequence of Desulfotomaculum reducens MI-1.</title>
        <authorList>
            <consortium name="US DOE Joint Genome Institute"/>
            <person name="Copeland A."/>
            <person name="Lucas S."/>
            <person name="Lapidus A."/>
            <person name="Barry K."/>
            <person name="Detter J.C."/>
            <person name="Glavina del Rio T."/>
            <person name="Hammon N."/>
            <person name="Israni S."/>
            <person name="Dalin E."/>
            <person name="Tice H."/>
            <person name="Pitluck S."/>
            <person name="Sims D."/>
            <person name="Brettin T."/>
            <person name="Bruce D."/>
            <person name="Han C."/>
            <person name="Tapia R."/>
            <person name="Schmutz J."/>
            <person name="Larimer F."/>
            <person name="Land M."/>
            <person name="Hauser L."/>
            <person name="Kyrpides N."/>
            <person name="Kim E."/>
            <person name="Tebo B.M."/>
            <person name="Richardson P."/>
        </authorList>
    </citation>
    <scope>NUCLEOTIDE SEQUENCE [LARGE SCALE GENOMIC DNA]</scope>
    <source>
        <strain>ATCC BAA-1160 / DSM 100696 / MI-1</strain>
    </source>
</reference>
<protein>
    <recommendedName>
        <fullName evidence="1">RNA-binding protein Hfq</fullName>
    </recommendedName>
</protein>
<accession>A4J5Q0</accession>
<gene>
    <name evidence="1" type="primary">hfq</name>
    <name type="ordered locus">Dred_1881</name>
</gene>
<keyword id="KW-1185">Reference proteome</keyword>
<keyword id="KW-0694">RNA-binding</keyword>
<keyword id="KW-0346">Stress response</keyword>
<dbReference type="EMBL" id="CP000612">
    <property type="protein sequence ID" value="ABO50403.1"/>
    <property type="molecule type" value="Genomic_DNA"/>
</dbReference>
<dbReference type="RefSeq" id="WP_011878215.1">
    <property type="nucleotide sequence ID" value="NC_009253.1"/>
</dbReference>
<dbReference type="SMR" id="A4J5Q0"/>
<dbReference type="STRING" id="349161.Dred_1881"/>
<dbReference type="KEGG" id="drm:Dred_1881"/>
<dbReference type="eggNOG" id="COG1923">
    <property type="taxonomic scope" value="Bacteria"/>
</dbReference>
<dbReference type="HOGENOM" id="CLU_113688_0_2_9"/>
<dbReference type="OrthoDB" id="9799751at2"/>
<dbReference type="Proteomes" id="UP000001556">
    <property type="component" value="Chromosome"/>
</dbReference>
<dbReference type="GO" id="GO:0005829">
    <property type="term" value="C:cytosol"/>
    <property type="evidence" value="ECO:0007669"/>
    <property type="project" value="TreeGrafter"/>
</dbReference>
<dbReference type="GO" id="GO:0003723">
    <property type="term" value="F:RNA binding"/>
    <property type="evidence" value="ECO:0007669"/>
    <property type="project" value="UniProtKB-UniRule"/>
</dbReference>
<dbReference type="GO" id="GO:0006355">
    <property type="term" value="P:regulation of DNA-templated transcription"/>
    <property type="evidence" value="ECO:0007669"/>
    <property type="project" value="InterPro"/>
</dbReference>
<dbReference type="GO" id="GO:0043487">
    <property type="term" value="P:regulation of RNA stability"/>
    <property type="evidence" value="ECO:0007669"/>
    <property type="project" value="TreeGrafter"/>
</dbReference>
<dbReference type="GO" id="GO:0045974">
    <property type="term" value="P:regulation of translation, ncRNA-mediated"/>
    <property type="evidence" value="ECO:0007669"/>
    <property type="project" value="TreeGrafter"/>
</dbReference>
<dbReference type="CDD" id="cd01716">
    <property type="entry name" value="Hfq"/>
    <property type="match status" value="1"/>
</dbReference>
<dbReference type="FunFam" id="2.30.30.100:FF:000012">
    <property type="entry name" value="RNA-binding protein Hfq"/>
    <property type="match status" value="1"/>
</dbReference>
<dbReference type="Gene3D" id="2.30.30.100">
    <property type="match status" value="1"/>
</dbReference>
<dbReference type="HAMAP" id="MF_00436">
    <property type="entry name" value="Hfq"/>
    <property type="match status" value="1"/>
</dbReference>
<dbReference type="InterPro" id="IPR005001">
    <property type="entry name" value="Hfq"/>
</dbReference>
<dbReference type="InterPro" id="IPR010920">
    <property type="entry name" value="LSM_dom_sf"/>
</dbReference>
<dbReference type="InterPro" id="IPR047575">
    <property type="entry name" value="Sm"/>
</dbReference>
<dbReference type="NCBIfam" id="TIGR02383">
    <property type="entry name" value="Hfq"/>
    <property type="match status" value="1"/>
</dbReference>
<dbReference type="NCBIfam" id="NF001602">
    <property type="entry name" value="PRK00395.1"/>
    <property type="match status" value="1"/>
</dbReference>
<dbReference type="PANTHER" id="PTHR34772">
    <property type="entry name" value="RNA-BINDING PROTEIN HFQ"/>
    <property type="match status" value="1"/>
</dbReference>
<dbReference type="PANTHER" id="PTHR34772:SF1">
    <property type="entry name" value="RNA-BINDING PROTEIN HFQ"/>
    <property type="match status" value="1"/>
</dbReference>
<dbReference type="Pfam" id="PF17209">
    <property type="entry name" value="Hfq"/>
    <property type="match status" value="1"/>
</dbReference>
<dbReference type="SUPFAM" id="SSF50182">
    <property type="entry name" value="Sm-like ribonucleoproteins"/>
    <property type="match status" value="1"/>
</dbReference>
<dbReference type="PROSITE" id="PS52002">
    <property type="entry name" value="SM"/>
    <property type="match status" value="1"/>
</dbReference>
<comment type="function">
    <text evidence="1">RNA chaperone that binds small regulatory RNA (sRNAs) and mRNAs to facilitate mRNA translational regulation in response to envelope stress, environmental stress and changes in metabolite concentrations. Also binds with high specificity to tRNAs.</text>
</comment>
<comment type="subunit">
    <text evidence="1">Homohexamer.</text>
</comment>
<comment type="similarity">
    <text evidence="1">Belongs to the Hfq family.</text>
</comment>
<sequence length="80" mass="9066">MTKPQINLQDAFLNQVRKENIPVTIFLINGFQLKGMVKGFDNFTVILESDGKQLMVYKHAISTISPLRPVNTSFSENKPI</sequence>